<dbReference type="EC" id="2.4.2.7" evidence="1"/>
<dbReference type="EMBL" id="AE009951">
    <property type="protein sequence ID" value="AAL95676.1"/>
    <property type="molecule type" value="Genomic_DNA"/>
</dbReference>
<dbReference type="RefSeq" id="NP_604377.1">
    <property type="nucleotide sequence ID" value="NC_003454.1"/>
</dbReference>
<dbReference type="RefSeq" id="WP_005902332.1">
    <property type="nucleotide sequence ID" value="NZ_OZ209243.1"/>
</dbReference>
<dbReference type="SMR" id="Q8RDM9"/>
<dbReference type="FunCoup" id="Q8RDM9">
    <property type="interactions" value="273"/>
</dbReference>
<dbReference type="STRING" id="190304.FN1483"/>
<dbReference type="PaxDb" id="190304-FN1483"/>
<dbReference type="EnsemblBacteria" id="AAL95676">
    <property type="protein sequence ID" value="AAL95676"/>
    <property type="gene ID" value="FN1483"/>
</dbReference>
<dbReference type="KEGG" id="fnu:FN1483"/>
<dbReference type="PATRIC" id="fig|190304.8.peg.2043"/>
<dbReference type="eggNOG" id="COG0503">
    <property type="taxonomic scope" value="Bacteria"/>
</dbReference>
<dbReference type="HOGENOM" id="CLU_063339_3_0_0"/>
<dbReference type="InParanoid" id="Q8RDM9"/>
<dbReference type="BioCyc" id="FNUC190304:G1FZS-2051-MONOMER"/>
<dbReference type="UniPathway" id="UPA00588">
    <property type="reaction ID" value="UER00646"/>
</dbReference>
<dbReference type="Proteomes" id="UP000002521">
    <property type="component" value="Chromosome"/>
</dbReference>
<dbReference type="GO" id="GO:0005737">
    <property type="term" value="C:cytoplasm"/>
    <property type="evidence" value="ECO:0000318"/>
    <property type="project" value="GO_Central"/>
</dbReference>
<dbReference type="GO" id="GO:0002055">
    <property type="term" value="F:adenine binding"/>
    <property type="evidence" value="ECO:0000318"/>
    <property type="project" value="GO_Central"/>
</dbReference>
<dbReference type="GO" id="GO:0003999">
    <property type="term" value="F:adenine phosphoribosyltransferase activity"/>
    <property type="evidence" value="ECO:0000318"/>
    <property type="project" value="GO_Central"/>
</dbReference>
<dbReference type="GO" id="GO:0016208">
    <property type="term" value="F:AMP binding"/>
    <property type="evidence" value="ECO:0000318"/>
    <property type="project" value="GO_Central"/>
</dbReference>
<dbReference type="GO" id="GO:0006168">
    <property type="term" value="P:adenine salvage"/>
    <property type="evidence" value="ECO:0000318"/>
    <property type="project" value="GO_Central"/>
</dbReference>
<dbReference type="GO" id="GO:0044209">
    <property type="term" value="P:AMP salvage"/>
    <property type="evidence" value="ECO:0000318"/>
    <property type="project" value="GO_Central"/>
</dbReference>
<dbReference type="GO" id="GO:0006166">
    <property type="term" value="P:purine ribonucleoside salvage"/>
    <property type="evidence" value="ECO:0007669"/>
    <property type="project" value="UniProtKB-KW"/>
</dbReference>
<dbReference type="CDD" id="cd06223">
    <property type="entry name" value="PRTases_typeI"/>
    <property type="match status" value="1"/>
</dbReference>
<dbReference type="FunFam" id="3.40.50.2020:FF:000004">
    <property type="entry name" value="Adenine phosphoribosyltransferase"/>
    <property type="match status" value="1"/>
</dbReference>
<dbReference type="Gene3D" id="3.40.50.2020">
    <property type="match status" value="1"/>
</dbReference>
<dbReference type="HAMAP" id="MF_00004">
    <property type="entry name" value="Aden_phosphoribosyltr"/>
    <property type="match status" value="1"/>
</dbReference>
<dbReference type="InterPro" id="IPR005764">
    <property type="entry name" value="Ade_phspho_trans"/>
</dbReference>
<dbReference type="InterPro" id="IPR000836">
    <property type="entry name" value="PRibTrfase_dom"/>
</dbReference>
<dbReference type="InterPro" id="IPR029057">
    <property type="entry name" value="PRTase-like"/>
</dbReference>
<dbReference type="InterPro" id="IPR050054">
    <property type="entry name" value="UPRTase/APRTase"/>
</dbReference>
<dbReference type="NCBIfam" id="TIGR01090">
    <property type="entry name" value="apt"/>
    <property type="match status" value="1"/>
</dbReference>
<dbReference type="NCBIfam" id="NF002633">
    <property type="entry name" value="PRK02304.1-2"/>
    <property type="match status" value="1"/>
</dbReference>
<dbReference type="NCBIfam" id="NF002634">
    <property type="entry name" value="PRK02304.1-3"/>
    <property type="match status" value="1"/>
</dbReference>
<dbReference type="NCBIfam" id="NF002636">
    <property type="entry name" value="PRK02304.1-5"/>
    <property type="match status" value="1"/>
</dbReference>
<dbReference type="PANTHER" id="PTHR32315">
    <property type="entry name" value="ADENINE PHOSPHORIBOSYLTRANSFERASE"/>
    <property type="match status" value="1"/>
</dbReference>
<dbReference type="PANTHER" id="PTHR32315:SF3">
    <property type="entry name" value="ADENINE PHOSPHORIBOSYLTRANSFERASE"/>
    <property type="match status" value="1"/>
</dbReference>
<dbReference type="Pfam" id="PF00156">
    <property type="entry name" value="Pribosyltran"/>
    <property type="match status" value="1"/>
</dbReference>
<dbReference type="SUPFAM" id="SSF53271">
    <property type="entry name" value="PRTase-like"/>
    <property type="match status" value="1"/>
</dbReference>
<dbReference type="PROSITE" id="PS00103">
    <property type="entry name" value="PUR_PYR_PR_TRANSFER"/>
    <property type="match status" value="1"/>
</dbReference>
<name>APT_FUSNN</name>
<comment type="function">
    <text evidence="1">Catalyzes a salvage reaction resulting in the formation of AMP, that is energically less costly than de novo synthesis.</text>
</comment>
<comment type="catalytic activity">
    <reaction evidence="1">
        <text>AMP + diphosphate = 5-phospho-alpha-D-ribose 1-diphosphate + adenine</text>
        <dbReference type="Rhea" id="RHEA:16609"/>
        <dbReference type="ChEBI" id="CHEBI:16708"/>
        <dbReference type="ChEBI" id="CHEBI:33019"/>
        <dbReference type="ChEBI" id="CHEBI:58017"/>
        <dbReference type="ChEBI" id="CHEBI:456215"/>
        <dbReference type="EC" id="2.4.2.7"/>
    </reaction>
</comment>
<comment type="pathway">
    <text evidence="1">Purine metabolism; AMP biosynthesis via salvage pathway; AMP from adenine: step 1/1.</text>
</comment>
<comment type="subunit">
    <text evidence="1">Homodimer.</text>
</comment>
<comment type="subcellular location">
    <subcellularLocation>
        <location evidence="1">Cytoplasm</location>
    </subcellularLocation>
</comment>
<comment type="similarity">
    <text evidence="1">Belongs to the purine/pyrimidine phosphoribosyltransferase family.</text>
</comment>
<feature type="chain" id="PRO_0000149385" description="Adenine phosphoribosyltransferase">
    <location>
        <begin position="1"/>
        <end position="170"/>
    </location>
</feature>
<reference key="1">
    <citation type="journal article" date="2002" name="J. Bacteriol.">
        <title>Genome sequence and analysis of the oral bacterium Fusobacterium nucleatum strain ATCC 25586.</title>
        <authorList>
            <person name="Kapatral V."/>
            <person name="Anderson I."/>
            <person name="Ivanova N."/>
            <person name="Reznik G."/>
            <person name="Los T."/>
            <person name="Lykidis A."/>
            <person name="Bhattacharyya A."/>
            <person name="Bartman A."/>
            <person name="Gardner W."/>
            <person name="Grechkin G."/>
            <person name="Zhu L."/>
            <person name="Vasieva O."/>
            <person name="Chu L."/>
            <person name="Kogan Y."/>
            <person name="Chaga O."/>
            <person name="Goltsman E."/>
            <person name="Bernal A."/>
            <person name="Larsen N."/>
            <person name="D'Souza M."/>
            <person name="Walunas T."/>
            <person name="Pusch G."/>
            <person name="Haselkorn R."/>
            <person name="Fonstein M."/>
            <person name="Kyrpides N.C."/>
            <person name="Overbeek R."/>
        </authorList>
    </citation>
    <scope>NUCLEOTIDE SEQUENCE [LARGE SCALE GENOMIC DNA]</scope>
    <source>
        <strain>ATCC 25586 / DSM 15643 / BCRC 10681 / CIP 101130 / JCM 8532 / KCTC 2640 / LMG 13131 / VPI 4355</strain>
    </source>
</reference>
<sequence length="170" mass="18910">MDLKNYVASIENYPKEGIIFRDITPLMNDGEAYKYATEKIVEFAKDHHIDIVVGPEARGFIFGCPVSYALGVGFVPVRKPGKLPREVIEYAYDLEYGSNKLCLHKDSIKPGQKVLVVDDLLATGGTVEATIKLVEELGGVVAGLAFLIELVDLKGRERLDKYPMITLMQY</sequence>
<accession>Q8RDM9</accession>
<keyword id="KW-0963">Cytoplasm</keyword>
<keyword id="KW-0328">Glycosyltransferase</keyword>
<keyword id="KW-0660">Purine salvage</keyword>
<keyword id="KW-1185">Reference proteome</keyword>
<keyword id="KW-0808">Transferase</keyword>
<gene>
    <name evidence="1" type="primary">apt</name>
    <name type="ordered locus">FN1483</name>
</gene>
<evidence type="ECO:0000255" key="1">
    <source>
        <dbReference type="HAMAP-Rule" id="MF_00004"/>
    </source>
</evidence>
<protein>
    <recommendedName>
        <fullName evidence="1">Adenine phosphoribosyltransferase</fullName>
        <shortName evidence="1">APRT</shortName>
        <ecNumber evidence="1">2.4.2.7</ecNumber>
    </recommendedName>
</protein>
<proteinExistence type="inferred from homology"/>
<organism>
    <name type="scientific">Fusobacterium nucleatum subsp. nucleatum (strain ATCC 25586 / DSM 15643 / BCRC 10681 / CIP 101130 / JCM 8532 / KCTC 2640 / LMG 13131 / VPI 4355)</name>
    <dbReference type="NCBI Taxonomy" id="190304"/>
    <lineage>
        <taxon>Bacteria</taxon>
        <taxon>Fusobacteriati</taxon>
        <taxon>Fusobacteriota</taxon>
        <taxon>Fusobacteriia</taxon>
        <taxon>Fusobacteriales</taxon>
        <taxon>Fusobacteriaceae</taxon>
        <taxon>Fusobacterium</taxon>
    </lineage>
</organism>